<evidence type="ECO:0000255" key="1">
    <source>
        <dbReference type="HAMAP-Rule" id="MF_00038"/>
    </source>
</evidence>
<organism>
    <name type="scientific">Flavobacterium psychrophilum (strain ATCC 49511 / DSM 21280 / CIP 103535 / JIP02/86)</name>
    <dbReference type="NCBI Taxonomy" id="402612"/>
    <lineage>
        <taxon>Bacteria</taxon>
        <taxon>Pseudomonadati</taxon>
        <taxon>Bacteroidota</taxon>
        <taxon>Flavobacteriia</taxon>
        <taxon>Flavobacteriales</taxon>
        <taxon>Flavobacteriaceae</taxon>
        <taxon>Flavobacterium</taxon>
    </lineage>
</organism>
<keyword id="KW-0131">Cell cycle</keyword>
<keyword id="KW-0132">Cell division</keyword>
<keyword id="KW-0997">Cell inner membrane</keyword>
<keyword id="KW-1003">Cell membrane</keyword>
<keyword id="KW-0133">Cell shape</keyword>
<keyword id="KW-0961">Cell wall biogenesis/degradation</keyword>
<keyword id="KW-0460">Magnesium</keyword>
<keyword id="KW-0472">Membrane</keyword>
<keyword id="KW-0479">Metal-binding</keyword>
<keyword id="KW-0573">Peptidoglycan synthesis</keyword>
<keyword id="KW-1185">Reference proteome</keyword>
<keyword id="KW-0808">Transferase</keyword>
<keyword id="KW-0812">Transmembrane</keyword>
<keyword id="KW-1133">Transmembrane helix</keyword>
<feature type="chain" id="PRO_1000002973" description="Phospho-N-acetylmuramoyl-pentapeptide-transferase">
    <location>
        <begin position="1"/>
        <end position="409"/>
    </location>
</feature>
<feature type="transmembrane region" description="Helical" evidence="1">
    <location>
        <begin position="23"/>
        <end position="43"/>
    </location>
</feature>
<feature type="transmembrane region" description="Helical" evidence="1">
    <location>
        <begin position="73"/>
        <end position="93"/>
    </location>
</feature>
<feature type="transmembrane region" description="Helical" evidence="1">
    <location>
        <begin position="95"/>
        <end position="115"/>
    </location>
</feature>
<feature type="transmembrane region" description="Helical" evidence="1">
    <location>
        <begin position="132"/>
        <end position="152"/>
    </location>
</feature>
<feature type="transmembrane region" description="Helical" evidence="1">
    <location>
        <begin position="214"/>
        <end position="234"/>
    </location>
</feature>
<feature type="transmembrane region" description="Helical" evidence="1">
    <location>
        <begin position="247"/>
        <end position="267"/>
    </location>
</feature>
<feature type="transmembrane region" description="Helical" evidence="1">
    <location>
        <begin position="279"/>
        <end position="299"/>
    </location>
</feature>
<feature type="transmembrane region" description="Helical" evidence="1">
    <location>
        <begin position="305"/>
        <end position="325"/>
    </location>
</feature>
<feature type="transmembrane region" description="Helical" evidence="1">
    <location>
        <begin position="331"/>
        <end position="351"/>
    </location>
</feature>
<feature type="transmembrane region" description="Helical" evidence="1">
    <location>
        <begin position="386"/>
        <end position="406"/>
    </location>
</feature>
<accession>A6H198</accession>
<gene>
    <name evidence="1" type="primary">mraY</name>
    <name type="ordered locus">FP2060</name>
</gene>
<name>MRAY_FLAPJ</name>
<comment type="function">
    <text evidence="1">Catalyzes the initial step of the lipid cycle reactions in the biosynthesis of the cell wall peptidoglycan: transfers peptidoglycan precursor phospho-MurNAc-pentapeptide from UDP-MurNAc-pentapeptide onto the lipid carrier undecaprenyl phosphate, yielding undecaprenyl-pyrophosphoryl-MurNAc-pentapeptide, known as lipid I.</text>
</comment>
<comment type="catalytic activity">
    <reaction evidence="1">
        <text>UDP-N-acetyl-alpha-D-muramoyl-L-alanyl-gamma-D-glutamyl-meso-2,6-diaminopimeloyl-D-alanyl-D-alanine + di-trans,octa-cis-undecaprenyl phosphate = di-trans,octa-cis-undecaprenyl diphospho-N-acetyl-alpha-D-muramoyl-L-alanyl-D-glutamyl-meso-2,6-diaminopimeloyl-D-alanyl-D-alanine + UMP</text>
        <dbReference type="Rhea" id="RHEA:28386"/>
        <dbReference type="ChEBI" id="CHEBI:57865"/>
        <dbReference type="ChEBI" id="CHEBI:60392"/>
        <dbReference type="ChEBI" id="CHEBI:61386"/>
        <dbReference type="ChEBI" id="CHEBI:61387"/>
        <dbReference type="EC" id="2.7.8.13"/>
    </reaction>
</comment>
<comment type="cofactor">
    <cofactor evidence="1">
        <name>Mg(2+)</name>
        <dbReference type="ChEBI" id="CHEBI:18420"/>
    </cofactor>
</comment>
<comment type="pathway">
    <text evidence="1">Cell wall biogenesis; peptidoglycan biosynthesis.</text>
</comment>
<comment type="subcellular location">
    <subcellularLocation>
        <location evidence="1">Cell inner membrane</location>
        <topology evidence="1">Multi-pass membrane protein</topology>
    </subcellularLocation>
</comment>
<comment type="similarity">
    <text evidence="1">Belongs to the glycosyltransferase 4 family. MraY subfamily.</text>
</comment>
<proteinExistence type="inferred from homology"/>
<protein>
    <recommendedName>
        <fullName evidence="1">Phospho-N-acetylmuramoyl-pentapeptide-transferase</fullName>
        <ecNumber evidence="1">2.7.8.13</ecNumber>
    </recommendedName>
    <alternativeName>
        <fullName evidence="1">UDP-MurNAc-pentapeptide phosphotransferase</fullName>
    </alternativeName>
</protein>
<reference key="1">
    <citation type="journal article" date="2007" name="Nat. Biotechnol.">
        <title>Complete genome sequence of the fish pathogen Flavobacterium psychrophilum.</title>
        <authorList>
            <person name="Duchaud E."/>
            <person name="Boussaha M."/>
            <person name="Loux V."/>
            <person name="Bernardet J.-F."/>
            <person name="Michel C."/>
            <person name="Kerouault B."/>
            <person name="Mondot S."/>
            <person name="Nicolas P."/>
            <person name="Bossy R."/>
            <person name="Caron C."/>
            <person name="Bessieres P."/>
            <person name="Gibrat J.-F."/>
            <person name="Claverol S."/>
            <person name="Dumetz F."/>
            <person name="Le Henaff M."/>
            <person name="Benmansour A."/>
        </authorList>
    </citation>
    <scope>NUCLEOTIDE SEQUENCE [LARGE SCALE GENOMIC DNA]</scope>
    <source>
        <strain>ATCC 49511 / DSM 21280 / CIP 103535 / JIP02/86</strain>
    </source>
</reference>
<sequence length="409" mass="45376">MLYYLFQYLDKYFDFPGAGVFQYITFRSALAIIMSLLISTIFGKRVISYLSRLQVGETVRELGLEGQTQKAGTPTMGGLIIIFSTLLPVLLLAKLNNIYIILLIVTTIWMGAIGFLDDYIKIFKKDKAGLKGIFKVIGQVGLGLIVGTTLYFHQDVTIRENISKNKIEVYSTQKGANTLSSDKKSTATTIPFFKNNEFDYAELLAWTGDGYRNYAWLIFIPIVIFIITAVSNGANLTDGIDGLAAGTSAISVIAIGVFTFVSGNVIFSNYLNIMFIPNSGEMTVFIAAFVGALIGFLWYNSYPAAVFMGDTGSLTIGGIIAVLAIAVRKEMLIPVFCGIFLAENLSVVLQVSYFKYTKKRFGEGRRIFLMSPLHHHYQKKGYHESKIVTRFWIVGILLAIVSIVTLKLR</sequence>
<dbReference type="EC" id="2.7.8.13" evidence="1"/>
<dbReference type="EMBL" id="AM398681">
    <property type="protein sequence ID" value="CAL44122.1"/>
    <property type="molecule type" value="Genomic_DNA"/>
</dbReference>
<dbReference type="RefSeq" id="WP_011964159.1">
    <property type="nucleotide sequence ID" value="NC_009613.3"/>
</dbReference>
<dbReference type="RefSeq" id="YP_001296924.1">
    <property type="nucleotide sequence ID" value="NC_009613.3"/>
</dbReference>
<dbReference type="SMR" id="A6H198"/>
<dbReference type="STRING" id="402612.FP2060"/>
<dbReference type="EnsemblBacteria" id="CAL44122">
    <property type="protein sequence ID" value="CAL44122"/>
    <property type="gene ID" value="FP2060"/>
</dbReference>
<dbReference type="GeneID" id="66551756"/>
<dbReference type="KEGG" id="fps:FP2060"/>
<dbReference type="PATRIC" id="fig|402612.5.peg.2087"/>
<dbReference type="eggNOG" id="COG0472">
    <property type="taxonomic scope" value="Bacteria"/>
</dbReference>
<dbReference type="HOGENOM" id="CLU_023982_0_0_10"/>
<dbReference type="OrthoDB" id="9805475at2"/>
<dbReference type="UniPathway" id="UPA00219"/>
<dbReference type="Proteomes" id="UP000006394">
    <property type="component" value="Chromosome"/>
</dbReference>
<dbReference type="GO" id="GO:0005886">
    <property type="term" value="C:plasma membrane"/>
    <property type="evidence" value="ECO:0007669"/>
    <property type="project" value="UniProtKB-SubCell"/>
</dbReference>
<dbReference type="GO" id="GO:0046872">
    <property type="term" value="F:metal ion binding"/>
    <property type="evidence" value="ECO:0007669"/>
    <property type="project" value="UniProtKB-KW"/>
</dbReference>
<dbReference type="GO" id="GO:0008963">
    <property type="term" value="F:phospho-N-acetylmuramoyl-pentapeptide-transferase activity"/>
    <property type="evidence" value="ECO:0007669"/>
    <property type="project" value="UniProtKB-UniRule"/>
</dbReference>
<dbReference type="GO" id="GO:0051992">
    <property type="term" value="F:UDP-N-acetylmuramoyl-L-alanyl-D-glutamyl-meso-2,6-diaminopimelyl-D-alanyl-D-alanine:undecaprenyl-phosphate transferase activity"/>
    <property type="evidence" value="ECO:0007669"/>
    <property type="project" value="RHEA"/>
</dbReference>
<dbReference type="GO" id="GO:0051301">
    <property type="term" value="P:cell division"/>
    <property type="evidence" value="ECO:0007669"/>
    <property type="project" value="UniProtKB-KW"/>
</dbReference>
<dbReference type="GO" id="GO:0071555">
    <property type="term" value="P:cell wall organization"/>
    <property type="evidence" value="ECO:0007669"/>
    <property type="project" value="UniProtKB-KW"/>
</dbReference>
<dbReference type="GO" id="GO:0009252">
    <property type="term" value="P:peptidoglycan biosynthetic process"/>
    <property type="evidence" value="ECO:0007669"/>
    <property type="project" value="UniProtKB-UniRule"/>
</dbReference>
<dbReference type="GO" id="GO:0008360">
    <property type="term" value="P:regulation of cell shape"/>
    <property type="evidence" value="ECO:0007669"/>
    <property type="project" value="UniProtKB-KW"/>
</dbReference>
<dbReference type="CDD" id="cd06852">
    <property type="entry name" value="GT_MraY"/>
    <property type="match status" value="1"/>
</dbReference>
<dbReference type="HAMAP" id="MF_00038">
    <property type="entry name" value="MraY"/>
    <property type="match status" value="1"/>
</dbReference>
<dbReference type="InterPro" id="IPR000715">
    <property type="entry name" value="Glycosyl_transferase_4"/>
</dbReference>
<dbReference type="InterPro" id="IPR003524">
    <property type="entry name" value="PNAcMuramoyl-5peptid_Trfase"/>
</dbReference>
<dbReference type="InterPro" id="IPR018480">
    <property type="entry name" value="PNAcMuramoyl-5peptid_Trfase_CS"/>
</dbReference>
<dbReference type="NCBIfam" id="TIGR00445">
    <property type="entry name" value="mraY"/>
    <property type="match status" value="1"/>
</dbReference>
<dbReference type="PANTHER" id="PTHR22926">
    <property type="entry name" value="PHOSPHO-N-ACETYLMURAMOYL-PENTAPEPTIDE-TRANSFERASE"/>
    <property type="match status" value="1"/>
</dbReference>
<dbReference type="PANTHER" id="PTHR22926:SF5">
    <property type="entry name" value="PHOSPHO-N-ACETYLMURAMOYL-PENTAPEPTIDE-TRANSFERASE HOMOLOG"/>
    <property type="match status" value="1"/>
</dbReference>
<dbReference type="Pfam" id="PF00953">
    <property type="entry name" value="Glycos_transf_4"/>
    <property type="match status" value="1"/>
</dbReference>
<dbReference type="Pfam" id="PF10555">
    <property type="entry name" value="MraY_sig1"/>
    <property type="match status" value="1"/>
</dbReference>
<dbReference type="PROSITE" id="PS01347">
    <property type="entry name" value="MRAY_1"/>
    <property type="match status" value="1"/>
</dbReference>
<dbReference type="PROSITE" id="PS01348">
    <property type="entry name" value="MRAY_2"/>
    <property type="match status" value="1"/>
</dbReference>